<keyword id="KW-0067">ATP-binding</keyword>
<keyword id="KW-1003">Cell membrane</keyword>
<keyword id="KW-0406">Ion transport</keyword>
<keyword id="KW-0460">Magnesium</keyword>
<keyword id="KW-0472">Membrane</keyword>
<keyword id="KW-0479">Metal-binding</keyword>
<keyword id="KW-0547">Nucleotide-binding</keyword>
<keyword id="KW-0597">Phosphoprotein</keyword>
<keyword id="KW-0614">Plasmid</keyword>
<keyword id="KW-0630">Potassium</keyword>
<keyword id="KW-0633">Potassium transport</keyword>
<keyword id="KW-1278">Translocase</keyword>
<keyword id="KW-0812">Transmembrane</keyword>
<keyword id="KW-1133">Transmembrane helix</keyword>
<keyword id="KW-0813">Transport</keyword>
<comment type="function">
    <text evidence="1">Part of the high-affinity ATP-driven potassium transport (or Kdp) system, which catalyzes the hydrolysis of ATP coupled with the electrogenic transport of potassium into the cytoplasm. This subunit is responsible for energy coupling to the transport system and for the release of the potassium ions to the cytoplasm.</text>
</comment>
<comment type="catalytic activity">
    <reaction evidence="1">
        <text>K(+)(out) + ATP + H2O = K(+)(in) + ADP + phosphate + H(+)</text>
        <dbReference type="Rhea" id="RHEA:16777"/>
        <dbReference type="ChEBI" id="CHEBI:15377"/>
        <dbReference type="ChEBI" id="CHEBI:15378"/>
        <dbReference type="ChEBI" id="CHEBI:29103"/>
        <dbReference type="ChEBI" id="CHEBI:30616"/>
        <dbReference type="ChEBI" id="CHEBI:43474"/>
        <dbReference type="ChEBI" id="CHEBI:456216"/>
        <dbReference type="EC" id="7.2.2.6"/>
    </reaction>
    <physiologicalReaction direction="left-to-right" evidence="1">
        <dbReference type="Rhea" id="RHEA:16778"/>
    </physiologicalReaction>
</comment>
<comment type="subunit">
    <text evidence="1">The system is composed of three essential subunits: KdpA, KdpB and KdpC.</text>
</comment>
<comment type="subcellular location">
    <subcellularLocation>
        <location evidence="1">Cell membrane</location>
        <topology evidence="1">Multi-pass membrane protein</topology>
    </subcellularLocation>
</comment>
<comment type="similarity">
    <text evidence="1">Belongs to the cation transport ATPase (P-type) (TC 3.A.3) family. Type IA subfamily.</text>
</comment>
<organism>
    <name type="scientific">Listeria innocua serovar 6a (strain ATCC BAA-680 / CLIP 11262)</name>
    <dbReference type="NCBI Taxonomy" id="272626"/>
    <lineage>
        <taxon>Bacteria</taxon>
        <taxon>Bacillati</taxon>
        <taxon>Bacillota</taxon>
        <taxon>Bacilli</taxon>
        <taxon>Bacillales</taxon>
        <taxon>Listeriaceae</taxon>
        <taxon>Listeria</taxon>
    </lineage>
</organism>
<sequence>MEKKAKPGFWDKKILGTAVKGAFIKLNPVYMVKNPVMFVVEIGAIISLALCFFPNLFGGNNQDMILYNSLVFIILLLTLLFANFSESVAEGRGKAQAASLKQTQQDMQARLILNGKEKVVNANTLKKGDIVLVNMGEVIPSDGEIIEGVASVDESAITGESAPVLKESGGDFASVTGGTTVASDYLKIQITSNPGESFIDKMIQLVEGASRKKTPNEIALSTLLVSLTIIFLIVIVSLYPMAIYTGIKLPVSTLVALTVCLIPTTIGGLLSAIGIAGMDRVTRFNVIALSGKAVEACGDVDTMILDKTGTITYGNRMASEFIALDKGNKNYLIHYAILASIQDNTPEGKSIVTLGKDLLKEDLDTNDIRENQFIEFTAQTRMSGVDLADGTRIRKGAYDAIIKYIKNIGGEIPHDLEDKVNNISKLGGTPLVVCAEEKIYGVIYLKDTIKPGLVERFERLRSIGIKTIMCTGDNPLTAATIAHEAGVDSFIAECKPEDKIKVIKDAQSKSKVVAMTGDGTNDAPALAQADVGIAMNSGTTAAKEAANMVDLDSDPTKILDVVEIGKQLLITRGALTTFSIANDIAKYFAIIPAMFLAIIPQMQVLNIMHLSSSYSAILSALIFNAIIIPCLIPLAMKGVKYKLQRSEKMLAHNMLVYGVGGMIVPFIGIKLIDLVIAPLLTMMGLG</sequence>
<name>KDPB2_LISIN</name>
<geneLocation type="plasmid">
    <name>pLI100</name>
</geneLocation>
<reference key="1">
    <citation type="journal article" date="2001" name="Science">
        <title>Comparative genomics of Listeria species.</title>
        <authorList>
            <person name="Glaser P."/>
            <person name="Frangeul L."/>
            <person name="Buchrieser C."/>
            <person name="Rusniok C."/>
            <person name="Amend A."/>
            <person name="Baquero F."/>
            <person name="Berche P."/>
            <person name="Bloecker H."/>
            <person name="Brandt P."/>
            <person name="Chakraborty T."/>
            <person name="Charbit A."/>
            <person name="Chetouani F."/>
            <person name="Couve E."/>
            <person name="de Daruvar A."/>
            <person name="Dehoux P."/>
            <person name="Domann E."/>
            <person name="Dominguez-Bernal G."/>
            <person name="Duchaud E."/>
            <person name="Durant L."/>
            <person name="Dussurget O."/>
            <person name="Entian K.-D."/>
            <person name="Fsihi H."/>
            <person name="Garcia-del Portillo F."/>
            <person name="Garrido P."/>
            <person name="Gautier L."/>
            <person name="Goebel W."/>
            <person name="Gomez-Lopez N."/>
            <person name="Hain T."/>
            <person name="Hauf J."/>
            <person name="Jackson D."/>
            <person name="Jones L.-M."/>
            <person name="Kaerst U."/>
            <person name="Kreft J."/>
            <person name="Kuhn M."/>
            <person name="Kunst F."/>
            <person name="Kurapkat G."/>
            <person name="Madueno E."/>
            <person name="Maitournam A."/>
            <person name="Mata Vicente J."/>
            <person name="Ng E."/>
            <person name="Nedjari H."/>
            <person name="Nordsiek G."/>
            <person name="Novella S."/>
            <person name="de Pablos B."/>
            <person name="Perez-Diaz J.-C."/>
            <person name="Purcell R."/>
            <person name="Remmel B."/>
            <person name="Rose M."/>
            <person name="Schlueter T."/>
            <person name="Simoes N."/>
            <person name="Tierrez A."/>
            <person name="Vazquez-Boland J.-A."/>
            <person name="Voss H."/>
            <person name="Wehland J."/>
            <person name="Cossart P."/>
        </authorList>
    </citation>
    <scope>NUCLEOTIDE SEQUENCE [LARGE SCALE GENOMIC DNA]</scope>
    <source>
        <strain>ATCC BAA-680 / CLIP 11262</strain>
    </source>
</reference>
<feature type="chain" id="PRO_0000046122" description="Potassium-transporting ATPase ATP-binding subunit 2">
    <location>
        <begin position="1"/>
        <end position="686"/>
    </location>
</feature>
<feature type="transmembrane region" description="Helical" evidence="1">
    <location>
        <begin position="37"/>
        <end position="57"/>
    </location>
</feature>
<feature type="transmembrane region" description="Helical" evidence="1">
    <location>
        <begin position="64"/>
        <end position="84"/>
    </location>
</feature>
<feature type="transmembrane region" description="Helical" evidence="1">
    <location>
        <begin position="223"/>
        <end position="243"/>
    </location>
</feature>
<feature type="transmembrane region" description="Helical" evidence="1">
    <location>
        <begin position="255"/>
        <end position="275"/>
    </location>
</feature>
<feature type="transmembrane region" description="Helical" evidence="1">
    <location>
        <begin position="588"/>
        <end position="608"/>
    </location>
</feature>
<feature type="transmembrane region" description="Helical" evidence="1">
    <location>
        <begin position="616"/>
        <end position="636"/>
    </location>
</feature>
<feature type="transmembrane region" description="Helical" evidence="1">
    <location>
        <begin position="656"/>
        <end position="676"/>
    </location>
</feature>
<feature type="active site" description="4-aspartylphosphate intermediate" evidence="1">
    <location>
        <position position="306"/>
    </location>
</feature>
<feature type="binding site" evidence="1">
    <location>
        <position position="343"/>
    </location>
    <ligand>
        <name>ATP</name>
        <dbReference type="ChEBI" id="CHEBI:30616"/>
    </ligand>
</feature>
<feature type="binding site" evidence="1">
    <location>
        <position position="347"/>
    </location>
    <ligand>
        <name>ATP</name>
        <dbReference type="ChEBI" id="CHEBI:30616"/>
    </ligand>
</feature>
<feature type="binding site" evidence="1">
    <location>
        <begin position="376"/>
        <end position="383"/>
    </location>
    <ligand>
        <name>ATP</name>
        <dbReference type="ChEBI" id="CHEBI:30616"/>
    </ligand>
</feature>
<feature type="binding site" evidence="1">
    <location>
        <position position="395"/>
    </location>
    <ligand>
        <name>ATP</name>
        <dbReference type="ChEBI" id="CHEBI:30616"/>
    </ligand>
</feature>
<feature type="binding site" evidence="1">
    <location>
        <position position="518"/>
    </location>
    <ligand>
        <name>Mg(2+)</name>
        <dbReference type="ChEBI" id="CHEBI:18420"/>
    </ligand>
</feature>
<feature type="binding site" evidence="1">
    <location>
        <position position="522"/>
    </location>
    <ligand>
        <name>Mg(2+)</name>
        <dbReference type="ChEBI" id="CHEBI:18420"/>
    </ligand>
</feature>
<protein>
    <recommendedName>
        <fullName evidence="1">Potassium-transporting ATPase ATP-binding subunit 2</fullName>
        <ecNumber evidence="1">7.2.2.6</ecNumber>
    </recommendedName>
    <alternativeName>
        <fullName evidence="1">ATP phosphohydrolase [potassium-transporting] B chain 2</fullName>
    </alternativeName>
    <alternativeName>
        <fullName evidence="1">Potassium-binding and translocating subunit B 2</fullName>
    </alternativeName>
    <alternativeName>
        <fullName evidence="1">Potassium-translocating ATPase B chain 2</fullName>
    </alternativeName>
</protein>
<accession>Q926K7</accession>
<dbReference type="EC" id="7.2.2.6" evidence="1"/>
<dbReference type="EMBL" id="AL592102">
    <property type="protein sequence ID" value="CAC42051.1"/>
    <property type="molecule type" value="Genomic_DNA"/>
</dbReference>
<dbReference type="SMR" id="Q926K7"/>
<dbReference type="KEGG" id="lin:pli0053"/>
<dbReference type="eggNOG" id="COG2216">
    <property type="taxonomic scope" value="Bacteria"/>
</dbReference>
<dbReference type="HOGENOM" id="CLU_025728_2_0_9"/>
<dbReference type="OrthoDB" id="9813266at2"/>
<dbReference type="Proteomes" id="UP000002513">
    <property type="component" value="Plasmid pLI100"/>
</dbReference>
<dbReference type="GO" id="GO:0005886">
    <property type="term" value="C:plasma membrane"/>
    <property type="evidence" value="ECO:0007669"/>
    <property type="project" value="UniProtKB-SubCell"/>
</dbReference>
<dbReference type="GO" id="GO:0005524">
    <property type="term" value="F:ATP binding"/>
    <property type="evidence" value="ECO:0007669"/>
    <property type="project" value="UniProtKB-UniRule"/>
</dbReference>
<dbReference type="GO" id="GO:0016887">
    <property type="term" value="F:ATP hydrolysis activity"/>
    <property type="evidence" value="ECO:0007669"/>
    <property type="project" value="InterPro"/>
</dbReference>
<dbReference type="GO" id="GO:0000287">
    <property type="term" value="F:magnesium ion binding"/>
    <property type="evidence" value="ECO:0007669"/>
    <property type="project" value="UniProtKB-UniRule"/>
</dbReference>
<dbReference type="GO" id="GO:0008556">
    <property type="term" value="F:P-type potassium transmembrane transporter activity"/>
    <property type="evidence" value="ECO:0007669"/>
    <property type="project" value="UniProtKB-UniRule"/>
</dbReference>
<dbReference type="CDD" id="cd02078">
    <property type="entry name" value="P-type_ATPase_K"/>
    <property type="match status" value="1"/>
</dbReference>
<dbReference type="FunFam" id="2.70.150.10:FF:000010">
    <property type="entry name" value="Potassium-transporting ATPase ATP-binding subunit"/>
    <property type="match status" value="1"/>
</dbReference>
<dbReference type="FunFam" id="3.40.1110.10:FF:000007">
    <property type="entry name" value="Potassium-transporting ATPase ATP-binding subunit"/>
    <property type="match status" value="1"/>
</dbReference>
<dbReference type="Gene3D" id="3.40.1110.10">
    <property type="entry name" value="Calcium-transporting ATPase, cytoplasmic domain N"/>
    <property type="match status" value="1"/>
</dbReference>
<dbReference type="Gene3D" id="2.70.150.10">
    <property type="entry name" value="Calcium-transporting ATPase, cytoplasmic transduction domain A"/>
    <property type="match status" value="1"/>
</dbReference>
<dbReference type="Gene3D" id="3.40.50.1000">
    <property type="entry name" value="HAD superfamily/HAD-like"/>
    <property type="match status" value="1"/>
</dbReference>
<dbReference type="HAMAP" id="MF_00285">
    <property type="entry name" value="KdpB"/>
    <property type="match status" value="1"/>
</dbReference>
<dbReference type="InterPro" id="IPR023299">
    <property type="entry name" value="ATPase_P-typ_cyto_dom_N"/>
</dbReference>
<dbReference type="InterPro" id="IPR018303">
    <property type="entry name" value="ATPase_P-typ_P_site"/>
</dbReference>
<dbReference type="InterPro" id="IPR023298">
    <property type="entry name" value="ATPase_P-typ_TM_dom_sf"/>
</dbReference>
<dbReference type="InterPro" id="IPR008250">
    <property type="entry name" value="ATPase_P-typ_transduc_dom_A_sf"/>
</dbReference>
<dbReference type="InterPro" id="IPR036412">
    <property type="entry name" value="HAD-like_sf"/>
</dbReference>
<dbReference type="InterPro" id="IPR023214">
    <property type="entry name" value="HAD_sf"/>
</dbReference>
<dbReference type="InterPro" id="IPR006391">
    <property type="entry name" value="P-type_ATPase_bsu_IA"/>
</dbReference>
<dbReference type="InterPro" id="IPR001757">
    <property type="entry name" value="P_typ_ATPase"/>
</dbReference>
<dbReference type="InterPro" id="IPR044492">
    <property type="entry name" value="P_typ_ATPase_HD_dom"/>
</dbReference>
<dbReference type="NCBIfam" id="TIGR01494">
    <property type="entry name" value="ATPase_P-type"/>
    <property type="match status" value="2"/>
</dbReference>
<dbReference type="NCBIfam" id="TIGR01497">
    <property type="entry name" value="kdpB"/>
    <property type="match status" value="1"/>
</dbReference>
<dbReference type="PANTHER" id="PTHR43743">
    <property type="entry name" value="POTASSIUM-TRANSPORTING ATPASE ATP-BINDING SUBUNIT"/>
    <property type="match status" value="1"/>
</dbReference>
<dbReference type="PANTHER" id="PTHR43743:SF1">
    <property type="entry name" value="POTASSIUM-TRANSPORTING ATPASE ATP-BINDING SUBUNIT"/>
    <property type="match status" value="1"/>
</dbReference>
<dbReference type="Pfam" id="PF00122">
    <property type="entry name" value="E1-E2_ATPase"/>
    <property type="match status" value="1"/>
</dbReference>
<dbReference type="Pfam" id="PF00702">
    <property type="entry name" value="Hydrolase"/>
    <property type="match status" value="1"/>
</dbReference>
<dbReference type="PRINTS" id="PR00119">
    <property type="entry name" value="CATATPASE"/>
</dbReference>
<dbReference type="PRINTS" id="PR00120">
    <property type="entry name" value="HATPASE"/>
</dbReference>
<dbReference type="SFLD" id="SFLDS00003">
    <property type="entry name" value="Haloacid_Dehalogenase"/>
    <property type="match status" value="1"/>
</dbReference>
<dbReference type="SFLD" id="SFLDF00027">
    <property type="entry name" value="p-type_atpase"/>
    <property type="match status" value="1"/>
</dbReference>
<dbReference type="SUPFAM" id="SSF81653">
    <property type="entry name" value="Calcium ATPase, transduction domain A"/>
    <property type="match status" value="1"/>
</dbReference>
<dbReference type="SUPFAM" id="SSF81665">
    <property type="entry name" value="Calcium ATPase, transmembrane domain M"/>
    <property type="match status" value="1"/>
</dbReference>
<dbReference type="SUPFAM" id="SSF56784">
    <property type="entry name" value="HAD-like"/>
    <property type="match status" value="1"/>
</dbReference>
<dbReference type="PROSITE" id="PS00154">
    <property type="entry name" value="ATPASE_E1_E2"/>
    <property type="match status" value="1"/>
</dbReference>
<evidence type="ECO:0000255" key="1">
    <source>
        <dbReference type="HAMAP-Rule" id="MF_00285"/>
    </source>
</evidence>
<proteinExistence type="inferred from homology"/>
<gene>
    <name evidence="1" type="primary">kdpB2</name>
    <name type="ordered locus">pli0053</name>
</gene>